<gene>
    <name evidence="2" type="primary">tuf</name>
    <name type="ordered locus">Aasi_1403</name>
</gene>
<protein>
    <recommendedName>
        <fullName evidence="2">Elongation factor Tu</fullName>
        <shortName evidence="2">EF-Tu</shortName>
        <ecNumber evidence="2">3.6.5.3</ecNumber>
    </recommendedName>
</protein>
<comment type="function">
    <text evidence="2">GTP hydrolase that promotes the GTP-dependent binding of aminoacyl-tRNA to the A-site of ribosomes during protein biosynthesis.</text>
</comment>
<comment type="catalytic activity">
    <reaction evidence="2">
        <text>GTP + H2O = GDP + phosphate + H(+)</text>
        <dbReference type="Rhea" id="RHEA:19669"/>
        <dbReference type="ChEBI" id="CHEBI:15377"/>
        <dbReference type="ChEBI" id="CHEBI:15378"/>
        <dbReference type="ChEBI" id="CHEBI:37565"/>
        <dbReference type="ChEBI" id="CHEBI:43474"/>
        <dbReference type="ChEBI" id="CHEBI:58189"/>
        <dbReference type="EC" id="3.6.5.3"/>
    </reaction>
    <physiologicalReaction direction="left-to-right" evidence="2">
        <dbReference type="Rhea" id="RHEA:19670"/>
    </physiologicalReaction>
</comment>
<comment type="subunit">
    <text evidence="2">Monomer.</text>
</comment>
<comment type="subcellular location">
    <subcellularLocation>
        <location evidence="2">Cytoplasm</location>
    </subcellularLocation>
</comment>
<comment type="similarity">
    <text evidence="2">Belongs to the TRAFAC class translation factor GTPase superfamily. Classic translation factor GTPase family. EF-Tu/EF-1A subfamily.</text>
</comment>
<sequence length="395" mass="43514">MAKETFDRSKPHVNIGTIGHVDHGKTTLTAAITKVLSKRGLAQVRDFGSIDNAPEERERGITINTSHVEYETSKRHYAHVDCPGHADYVKNMITGAAQMDGAILVVAATDGPMPQTREHILLASQVGVPNLVVFLNKVDAVDDPELVDLVEEEVRDLLKAYKFDGDNIPVIRGSALGALNGEPEWEAKVEELMDNVDEYIPLPQRLIDRDFLMPVEDTMSITGRGTVATGRIERGVINVGDPVQIIGMGAQNLNSTVTGVEMFRKLLDRGEAGDNVGLLLRGIDKEKIHRGMVICKPKSVTPHRKFKAEVYVLSKEEGGRHTPFFNKYRPQFYFRTTDVTGEVKLPAGVEMVMPGDNIALEVELINEIAMEKGLRFAIREGGRTVGAGQIIEILD</sequence>
<evidence type="ECO:0000250" key="1"/>
<evidence type="ECO:0000255" key="2">
    <source>
        <dbReference type="HAMAP-Rule" id="MF_00118"/>
    </source>
</evidence>
<organism>
    <name type="scientific">Amoebophilus asiaticus (strain 5a2)</name>
    <dbReference type="NCBI Taxonomy" id="452471"/>
    <lineage>
        <taxon>Bacteria</taxon>
        <taxon>Pseudomonadati</taxon>
        <taxon>Bacteroidota</taxon>
        <taxon>Cytophagia</taxon>
        <taxon>Cytophagales</taxon>
        <taxon>Amoebophilaceae</taxon>
        <taxon>Candidatus Amoebophilus</taxon>
    </lineage>
</organism>
<proteinExistence type="inferred from homology"/>
<name>EFTU_AMOA5</name>
<keyword id="KW-0963">Cytoplasm</keyword>
<keyword id="KW-0251">Elongation factor</keyword>
<keyword id="KW-0342">GTP-binding</keyword>
<keyword id="KW-0378">Hydrolase</keyword>
<keyword id="KW-0460">Magnesium</keyword>
<keyword id="KW-0479">Metal-binding</keyword>
<keyword id="KW-0547">Nucleotide-binding</keyword>
<keyword id="KW-0648">Protein biosynthesis</keyword>
<keyword id="KW-1185">Reference proteome</keyword>
<feature type="chain" id="PRO_1000095047" description="Elongation factor Tu">
    <location>
        <begin position="1"/>
        <end position="395"/>
    </location>
</feature>
<feature type="domain" description="tr-type G">
    <location>
        <begin position="10"/>
        <end position="204"/>
    </location>
</feature>
<feature type="region of interest" description="G1" evidence="1">
    <location>
        <begin position="19"/>
        <end position="26"/>
    </location>
</feature>
<feature type="region of interest" description="G2" evidence="1">
    <location>
        <begin position="60"/>
        <end position="64"/>
    </location>
</feature>
<feature type="region of interest" description="G3" evidence="1">
    <location>
        <begin position="81"/>
        <end position="84"/>
    </location>
</feature>
<feature type="region of interest" description="G4" evidence="1">
    <location>
        <begin position="136"/>
        <end position="139"/>
    </location>
</feature>
<feature type="region of interest" description="G5" evidence="1">
    <location>
        <begin position="174"/>
        <end position="176"/>
    </location>
</feature>
<feature type="binding site" evidence="2">
    <location>
        <begin position="19"/>
        <end position="26"/>
    </location>
    <ligand>
        <name>GTP</name>
        <dbReference type="ChEBI" id="CHEBI:37565"/>
    </ligand>
</feature>
<feature type="binding site" evidence="2">
    <location>
        <position position="26"/>
    </location>
    <ligand>
        <name>Mg(2+)</name>
        <dbReference type="ChEBI" id="CHEBI:18420"/>
    </ligand>
</feature>
<feature type="binding site" evidence="2">
    <location>
        <begin position="81"/>
        <end position="85"/>
    </location>
    <ligand>
        <name>GTP</name>
        <dbReference type="ChEBI" id="CHEBI:37565"/>
    </ligand>
</feature>
<feature type="binding site" evidence="2">
    <location>
        <begin position="136"/>
        <end position="139"/>
    </location>
    <ligand>
        <name>GTP</name>
        <dbReference type="ChEBI" id="CHEBI:37565"/>
    </ligand>
</feature>
<reference key="1">
    <citation type="journal article" date="2010" name="J. Bacteriol.">
        <title>The genome of the amoeba symbiont 'Candidatus Amoebophilus asiaticus' reveals common mechanisms for host cell interaction among amoeba-associated bacteria.</title>
        <authorList>
            <person name="Schmitz-Esser S."/>
            <person name="Tischler P."/>
            <person name="Arnold R."/>
            <person name="Montanaro J."/>
            <person name="Wagner M."/>
            <person name="Rattei T."/>
            <person name="Horn M."/>
        </authorList>
    </citation>
    <scope>NUCLEOTIDE SEQUENCE [LARGE SCALE GENOMIC DNA]</scope>
    <source>
        <strain>5a2</strain>
    </source>
</reference>
<dbReference type="EC" id="3.6.5.3" evidence="2"/>
<dbReference type="EMBL" id="CP001102">
    <property type="protein sequence ID" value="ACE06699.1"/>
    <property type="molecule type" value="Genomic_DNA"/>
</dbReference>
<dbReference type="RefSeq" id="WP_012473441.1">
    <property type="nucleotide sequence ID" value="NC_010830.1"/>
</dbReference>
<dbReference type="SMR" id="B3ETZ7"/>
<dbReference type="STRING" id="452471.Aasi_1403"/>
<dbReference type="KEGG" id="aas:Aasi_1403"/>
<dbReference type="eggNOG" id="COG0050">
    <property type="taxonomic scope" value="Bacteria"/>
</dbReference>
<dbReference type="HOGENOM" id="CLU_007265_0_0_10"/>
<dbReference type="OrthoDB" id="9804504at2"/>
<dbReference type="Proteomes" id="UP000001227">
    <property type="component" value="Chromosome"/>
</dbReference>
<dbReference type="GO" id="GO:0005829">
    <property type="term" value="C:cytosol"/>
    <property type="evidence" value="ECO:0007669"/>
    <property type="project" value="TreeGrafter"/>
</dbReference>
<dbReference type="GO" id="GO:0005525">
    <property type="term" value="F:GTP binding"/>
    <property type="evidence" value="ECO:0007669"/>
    <property type="project" value="UniProtKB-UniRule"/>
</dbReference>
<dbReference type="GO" id="GO:0003924">
    <property type="term" value="F:GTPase activity"/>
    <property type="evidence" value="ECO:0007669"/>
    <property type="project" value="InterPro"/>
</dbReference>
<dbReference type="GO" id="GO:0003746">
    <property type="term" value="F:translation elongation factor activity"/>
    <property type="evidence" value="ECO:0007669"/>
    <property type="project" value="UniProtKB-UniRule"/>
</dbReference>
<dbReference type="CDD" id="cd01884">
    <property type="entry name" value="EF_Tu"/>
    <property type="match status" value="1"/>
</dbReference>
<dbReference type="CDD" id="cd03697">
    <property type="entry name" value="EFTU_II"/>
    <property type="match status" value="1"/>
</dbReference>
<dbReference type="CDD" id="cd03707">
    <property type="entry name" value="EFTU_III"/>
    <property type="match status" value="1"/>
</dbReference>
<dbReference type="FunFam" id="2.40.30.10:FF:000001">
    <property type="entry name" value="Elongation factor Tu"/>
    <property type="match status" value="1"/>
</dbReference>
<dbReference type="FunFam" id="3.40.50.300:FF:000003">
    <property type="entry name" value="Elongation factor Tu"/>
    <property type="match status" value="1"/>
</dbReference>
<dbReference type="Gene3D" id="3.40.50.300">
    <property type="entry name" value="P-loop containing nucleotide triphosphate hydrolases"/>
    <property type="match status" value="1"/>
</dbReference>
<dbReference type="Gene3D" id="2.40.30.10">
    <property type="entry name" value="Translation factors"/>
    <property type="match status" value="2"/>
</dbReference>
<dbReference type="HAMAP" id="MF_00118_B">
    <property type="entry name" value="EF_Tu_B"/>
    <property type="match status" value="1"/>
</dbReference>
<dbReference type="InterPro" id="IPR041709">
    <property type="entry name" value="EF-Tu_GTP-bd"/>
</dbReference>
<dbReference type="InterPro" id="IPR050055">
    <property type="entry name" value="EF-Tu_GTPase"/>
</dbReference>
<dbReference type="InterPro" id="IPR004161">
    <property type="entry name" value="EFTu-like_2"/>
</dbReference>
<dbReference type="InterPro" id="IPR033720">
    <property type="entry name" value="EFTU_2"/>
</dbReference>
<dbReference type="InterPro" id="IPR031157">
    <property type="entry name" value="G_TR_CS"/>
</dbReference>
<dbReference type="InterPro" id="IPR027417">
    <property type="entry name" value="P-loop_NTPase"/>
</dbReference>
<dbReference type="InterPro" id="IPR005225">
    <property type="entry name" value="Small_GTP-bd"/>
</dbReference>
<dbReference type="InterPro" id="IPR000795">
    <property type="entry name" value="T_Tr_GTP-bd_dom"/>
</dbReference>
<dbReference type="InterPro" id="IPR009000">
    <property type="entry name" value="Transl_B-barrel_sf"/>
</dbReference>
<dbReference type="InterPro" id="IPR009001">
    <property type="entry name" value="Transl_elong_EF1A/Init_IF2_C"/>
</dbReference>
<dbReference type="InterPro" id="IPR004541">
    <property type="entry name" value="Transl_elong_EFTu/EF1A_bac/org"/>
</dbReference>
<dbReference type="InterPro" id="IPR004160">
    <property type="entry name" value="Transl_elong_EFTu/EF1A_C"/>
</dbReference>
<dbReference type="NCBIfam" id="TIGR00485">
    <property type="entry name" value="EF-Tu"/>
    <property type="match status" value="1"/>
</dbReference>
<dbReference type="NCBIfam" id="NF000766">
    <property type="entry name" value="PRK00049.1"/>
    <property type="match status" value="1"/>
</dbReference>
<dbReference type="NCBIfam" id="NF009372">
    <property type="entry name" value="PRK12735.1"/>
    <property type="match status" value="1"/>
</dbReference>
<dbReference type="NCBIfam" id="NF009373">
    <property type="entry name" value="PRK12736.1"/>
    <property type="match status" value="1"/>
</dbReference>
<dbReference type="NCBIfam" id="TIGR00231">
    <property type="entry name" value="small_GTP"/>
    <property type="match status" value="1"/>
</dbReference>
<dbReference type="PANTHER" id="PTHR43721:SF22">
    <property type="entry name" value="ELONGATION FACTOR TU, MITOCHONDRIAL"/>
    <property type="match status" value="1"/>
</dbReference>
<dbReference type="PANTHER" id="PTHR43721">
    <property type="entry name" value="ELONGATION FACTOR TU-RELATED"/>
    <property type="match status" value="1"/>
</dbReference>
<dbReference type="Pfam" id="PF00009">
    <property type="entry name" value="GTP_EFTU"/>
    <property type="match status" value="1"/>
</dbReference>
<dbReference type="Pfam" id="PF03144">
    <property type="entry name" value="GTP_EFTU_D2"/>
    <property type="match status" value="1"/>
</dbReference>
<dbReference type="Pfam" id="PF03143">
    <property type="entry name" value="GTP_EFTU_D3"/>
    <property type="match status" value="1"/>
</dbReference>
<dbReference type="PRINTS" id="PR00315">
    <property type="entry name" value="ELONGATNFCT"/>
</dbReference>
<dbReference type="SUPFAM" id="SSF50465">
    <property type="entry name" value="EF-Tu/eEF-1alpha/eIF2-gamma C-terminal domain"/>
    <property type="match status" value="1"/>
</dbReference>
<dbReference type="SUPFAM" id="SSF52540">
    <property type="entry name" value="P-loop containing nucleoside triphosphate hydrolases"/>
    <property type="match status" value="1"/>
</dbReference>
<dbReference type="SUPFAM" id="SSF50447">
    <property type="entry name" value="Translation proteins"/>
    <property type="match status" value="1"/>
</dbReference>
<dbReference type="PROSITE" id="PS00301">
    <property type="entry name" value="G_TR_1"/>
    <property type="match status" value="1"/>
</dbReference>
<dbReference type="PROSITE" id="PS51722">
    <property type="entry name" value="G_TR_2"/>
    <property type="match status" value="1"/>
</dbReference>
<accession>B3ETZ7</accession>